<sequence length="266" mass="28474">MSGTGRQFRVARAVISPQHPGMIRDKEKPAPTKPGKGVIAVAPPSFRRERALLKRGVWPVAGCDEAGRGPLAGPVVAAAVVLDPKRIPKGLDDSKRLTADKREQLFEQICATAAFAVAYASPARIDRDNILRASLWALAKAVHALPEMPRHVFVDGRDKIATSCDCDAVIGGDGLVLSIAAASIIAKVSRDRLMCRLAEDCPGYGFENHKGYGVPEHLAALDRLGPSKHHRRLFAPVVAARQKHQPETATVPAVAADLFEFGAPPV</sequence>
<dbReference type="EC" id="3.1.26.4" evidence="1"/>
<dbReference type="EMBL" id="CP000301">
    <property type="protein sequence ID" value="ABD89884.1"/>
    <property type="molecule type" value="Genomic_DNA"/>
</dbReference>
<dbReference type="SMR" id="Q20YA2"/>
<dbReference type="STRING" id="316056.RPC_4361"/>
<dbReference type="KEGG" id="rpc:RPC_4361"/>
<dbReference type="eggNOG" id="COG0164">
    <property type="taxonomic scope" value="Bacteria"/>
</dbReference>
<dbReference type="HOGENOM" id="CLU_036532_2_2_5"/>
<dbReference type="OrthoDB" id="9803420at2"/>
<dbReference type="GO" id="GO:0005737">
    <property type="term" value="C:cytoplasm"/>
    <property type="evidence" value="ECO:0007669"/>
    <property type="project" value="UniProtKB-SubCell"/>
</dbReference>
<dbReference type="GO" id="GO:0032299">
    <property type="term" value="C:ribonuclease H2 complex"/>
    <property type="evidence" value="ECO:0007669"/>
    <property type="project" value="TreeGrafter"/>
</dbReference>
<dbReference type="GO" id="GO:0030145">
    <property type="term" value="F:manganese ion binding"/>
    <property type="evidence" value="ECO:0007669"/>
    <property type="project" value="UniProtKB-UniRule"/>
</dbReference>
<dbReference type="GO" id="GO:0003723">
    <property type="term" value="F:RNA binding"/>
    <property type="evidence" value="ECO:0007669"/>
    <property type="project" value="InterPro"/>
</dbReference>
<dbReference type="GO" id="GO:0004523">
    <property type="term" value="F:RNA-DNA hybrid ribonuclease activity"/>
    <property type="evidence" value="ECO:0007669"/>
    <property type="project" value="UniProtKB-UniRule"/>
</dbReference>
<dbReference type="GO" id="GO:0043137">
    <property type="term" value="P:DNA replication, removal of RNA primer"/>
    <property type="evidence" value="ECO:0007669"/>
    <property type="project" value="TreeGrafter"/>
</dbReference>
<dbReference type="GO" id="GO:0006298">
    <property type="term" value="P:mismatch repair"/>
    <property type="evidence" value="ECO:0007669"/>
    <property type="project" value="TreeGrafter"/>
</dbReference>
<dbReference type="CDD" id="cd07182">
    <property type="entry name" value="RNase_HII_bacteria_HII_like"/>
    <property type="match status" value="1"/>
</dbReference>
<dbReference type="FunFam" id="3.30.420.10:FF:000078">
    <property type="entry name" value="Ribonuclease HII"/>
    <property type="match status" value="1"/>
</dbReference>
<dbReference type="Gene3D" id="3.30.420.10">
    <property type="entry name" value="Ribonuclease H-like superfamily/Ribonuclease H"/>
    <property type="match status" value="1"/>
</dbReference>
<dbReference type="HAMAP" id="MF_00052_B">
    <property type="entry name" value="RNase_HII_B"/>
    <property type="match status" value="1"/>
</dbReference>
<dbReference type="InterPro" id="IPR022898">
    <property type="entry name" value="RNase_HII"/>
</dbReference>
<dbReference type="InterPro" id="IPR001352">
    <property type="entry name" value="RNase_HII/HIII"/>
</dbReference>
<dbReference type="InterPro" id="IPR024567">
    <property type="entry name" value="RNase_HII/HIII_dom"/>
</dbReference>
<dbReference type="InterPro" id="IPR012337">
    <property type="entry name" value="RNaseH-like_sf"/>
</dbReference>
<dbReference type="InterPro" id="IPR036397">
    <property type="entry name" value="RNaseH_sf"/>
</dbReference>
<dbReference type="NCBIfam" id="NF000595">
    <property type="entry name" value="PRK00015.1-3"/>
    <property type="match status" value="1"/>
</dbReference>
<dbReference type="PANTHER" id="PTHR10954">
    <property type="entry name" value="RIBONUCLEASE H2 SUBUNIT A"/>
    <property type="match status" value="1"/>
</dbReference>
<dbReference type="PANTHER" id="PTHR10954:SF18">
    <property type="entry name" value="RIBONUCLEASE HII"/>
    <property type="match status" value="1"/>
</dbReference>
<dbReference type="Pfam" id="PF01351">
    <property type="entry name" value="RNase_HII"/>
    <property type="match status" value="1"/>
</dbReference>
<dbReference type="SUPFAM" id="SSF53098">
    <property type="entry name" value="Ribonuclease H-like"/>
    <property type="match status" value="1"/>
</dbReference>
<dbReference type="PROSITE" id="PS51975">
    <property type="entry name" value="RNASE_H_2"/>
    <property type="match status" value="1"/>
</dbReference>
<proteinExistence type="inferred from homology"/>
<feature type="chain" id="PRO_0000334946" description="Ribonuclease HII">
    <location>
        <begin position="1"/>
        <end position="266"/>
    </location>
</feature>
<feature type="domain" description="RNase H type-2" evidence="2">
    <location>
        <begin position="58"/>
        <end position="246"/>
    </location>
</feature>
<feature type="region of interest" description="Disordered" evidence="3">
    <location>
        <begin position="19"/>
        <end position="38"/>
    </location>
</feature>
<feature type="binding site" evidence="1">
    <location>
        <position position="64"/>
    </location>
    <ligand>
        <name>a divalent metal cation</name>
        <dbReference type="ChEBI" id="CHEBI:60240"/>
    </ligand>
</feature>
<feature type="binding site" evidence="1">
    <location>
        <position position="65"/>
    </location>
    <ligand>
        <name>a divalent metal cation</name>
        <dbReference type="ChEBI" id="CHEBI:60240"/>
    </ligand>
</feature>
<feature type="binding site" evidence="1">
    <location>
        <position position="155"/>
    </location>
    <ligand>
        <name>a divalent metal cation</name>
        <dbReference type="ChEBI" id="CHEBI:60240"/>
    </ligand>
</feature>
<accession>Q20YA2</accession>
<gene>
    <name evidence="1" type="primary">rnhB</name>
    <name type="ordered locus">RPC_4361</name>
</gene>
<evidence type="ECO:0000255" key="1">
    <source>
        <dbReference type="HAMAP-Rule" id="MF_00052"/>
    </source>
</evidence>
<evidence type="ECO:0000255" key="2">
    <source>
        <dbReference type="PROSITE-ProRule" id="PRU01319"/>
    </source>
</evidence>
<evidence type="ECO:0000256" key="3">
    <source>
        <dbReference type="SAM" id="MobiDB-lite"/>
    </source>
</evidence>
<reference key="1">
    <citation type="submission" date="2006-03" db="EMBL/GenBank/DDBJ databases">
        <title>Complete sequence of Rhodopseudomonas palustris BisB18.</title>
        <authorList>
            <consortium name="US DOE Joint Genome Institute"/>
            <person name="Copeland A."/>
            <person name="Lucas S."/>
            <person name="Lapidus A."/>
            <person name="Barry K."/>
            <person name="Detter J.C."/>
            <person name="Glavina del Rio T."/>
            <person name="Hammon N."/>
            <person name="Israni S."/>
            <person name="Dalin E."/>
            <person name="Tice H."/>
            <person name="Pitluck S."/>
            <person name="Chain P."/>
            <person name="Malfatti S."/>
            <person name="Shin M."/>
            <person name="Vergez L."/>
            <person name="Schmutz J."/>
            <person name="Larimer F."/>
            <person name="Land M."/>
            <person name="Hauser L."/>
            <person name="Pelletier D.A."/>
            <person name="Kyrpides N."/>
            <person name="Anderson I."/>
            <person name="Oda Y."/>
            <person name="Harwood C.S."/>
            <person name="Richardson P."/>
        </authorList>
    </citation>
    <scope>NUCLEOTIDE SEQUENCE [LARGE SCALE GENOMIC DNA]</scope>
    <source>
        <strain>BisB18</strain>
    </source>
</reference>
<comment type="function">
    <text evidence="1">Endonuclease that specifically degrades the RNA of RNA-DNA hybrids.</text>
</comment>
<comment type="catalytic activity">
    <reaction evidence="1">
        <text>Endonucleolytic cleavage to 5'-phosphomonoester.</text>
        <dbReference type="EC" id="3.1.26.4"/>
    </reaction>
</comment>
<comment type="cofactor">
    <cofactor evidence="1">
        <name>Mn(2+)</name>
        <dbReference type="ChEBI" id="CHEBI:29035"/>
    </cofactor>
    <cofactor evidence="1">
        <name>Mg(2+)</name>
        <dbReference type="ChEBI" id="CHEBI:18420"/>
    </cofactor>
    <text evidence="1">Manganese or magnesium. Binds 1 divalent metal ion per monomer in the absence of substrate. May bind a second metal ion after substrate binding.</text>
</comment>
<comment type="subcellular location">
    <subcellularLocation>
        <location evidence="1">Cytoplasm</location>
    </subcellularLocation>
</comment>
<comment type="similarity">
    <text evidence="1">Belongs to the RNase HII family.</text>
</comment>
<protein>
    <recommendedName>
        <fullName evidence="1">Ribonuclease HII</fullName>
        <shortName evidence="1">RNase HII</shortName>
        <ecNumber evidence="1">3.1.26.4</ecNumber>
    </recommendedName>
</protein>
<organism>
    <name type="scientific">Rhodopseudomonas palustris (strain BisB18)</name>
    <dbReference type="NCBI Taxonomy" id="316056"/>
    <lineage>
        <taxon>Bacteria</taxon>
        <taxon>Pseudomonadati</taxon>
        <taxon>Pseudomonadota</taxon>
        <taxon>Alphaproteobacteria</taxon>
        <taxon>Hyphomicrobiales</taxon>
        <taxon>Nitrobacteraceae</taxon>
        <taxon>Rhodopseudomonas</taxon>
    </lineage>
</organism>
<name>RNH2_RHOPB</name>
<keyword id="KW-0963">Cytoplasm</keyword>
<keyword id="KW-0255">Endonuclease</keyword>
<keyword id="KW-0378">Hydrolase</keyword>
<keyword id="KW-0464">Manganese</keyword>
<keyword id="KW-0479">Metal-binding</keyword>
<keyword id="KW-0540">Nuclease</keyword>